<reference key="1">
    <citation type="submission" date="2006-01" db="EMBL/GenBank/DDBJ databases">
        <title>Complete sequence of Anaeromyxobacter dehalogenans 2CP-C.</title>
        <authorList>
            <person name="Copeland A."/>
            <person name="Lucas S."/>
            <person name="Lapidus A."/>
            <person name="Barry K."/>
            <person name="Detter J.C."/>
            <person name="Glavina T."/>
            <person name="Hammon N."/>
            <person name="Israni S."/>
            <person name="Pitluck S."/>
            <person name="Brettin T."/>
            <person name="Bruce D."/>
            <person name="Han C."/>
            <person name="Tapia R."/>
            <person name="Gilna P."/>
            <person name="Kiss H."/>
            <person name="Schmutz J."/>
            <person name="Larimer F."/>
            <person name="Land M."/>
            <person name="Kyrpides N."/>
            <person name="Anderson I."/>
            <person name="Sanford R.A."/>
            <person name="Ritalahti K.M."/>
            <person name="Thomas H.S."/>
            <person name="Kirby J.R."/>
            <person name="Zhulin I.B."/>
            <person name="Loeffler F.E."/>
            <person name="Richardson P."/>
        </authorList>
    </citation>
    <scope>NUCLEOTIDE SEQUENCE [LARGE SCALE GENOMIC DNA]</scope>
    <source>
        <strain>2CP-C</strain>
    </source>
</reference>
<organism>
    <name type="scientific">Anaeromyxobacter dehalogenans (strain 2CP-C)</name>
    <dbReference type="NCBI Taxonomy" id="290397"/>
    <lineage>
        <taxon>Bacteria</taxon>
        <taxon>Pseudomonadati</taxon>
        <taxon>Myxococcota</taxon>
        <taxon>Myxococcia</taxon>
        <taxon>Myxococcales</taxon>
        <taxon>Cystobacterineae</taxon>
        <taxon>Anaeromyxobacteraceae</taxon>
        <taxon>Anaeromyxobacter</taxon>
    </lineage>
</organism>
<name>LPXA_ANADE</name>
<protein>
    <recommendedName>
        <fullName evidence="1">Acyl-[acyl-carrier-protein]--UDP-N-acetylglucosamine O-acyltransferase</fullName>
        <shortName evidence="1">UDP-N-acetylglucosamine acyltransferase</shortName>
        <ecNumber evidence="1">2.3.1.129</ecNumber>
    </recommendedName>
</protein>
<sequence>MAIHPTAIVEAGAQVDPSCDIGPYAVIGPLVRMGPGNSVGAHAVVTGRTTLGASNRIFPHAVIGGIPQDLKYRGEDTALVIGDRNTFREFATVNLGTAGGGGVTRIGSGGLFMASSHIGHDCQVGDGAIIANSVAIAGHVLIEDHVHFGGLSASHQFCRVGRLAFVGGMTGVAMDVAPYCTVAGARGELAGLNTIGMQRAGMTEEQVGRVKQAYKIVFRSSLGLAEAIAQLEAELAGHPETDHFIAFLKGSQRGITR</sequence>
<gene>
    <name evidence="1" type="primary">lpxA</name>
    <name type="ordered locus">Adeh_1085</name>
</gene>
<keyword id="KW-0012">Acyltransferase</keyword>
<keyword id="KW-0963">Cytoplasm</keyword>
<keyword id="KW-0441">Lipid A biosynthesis</keyword>
<keyword id="KW-0444">Lipid biosynthesis</keyword>
<keyword id="KW-0443">Lipid metabolism</keyword>
<keyword id="KW-1185">Reference proteome</keyword>
<keyword id="KW-0677">Repeat</keyword>
<keyword id="KW-0808">Transferase</keyword>
<accession>Q2IPX7</accession>
<proteinExistence type="inferred from homology"/>
<evidence type="ECO:0000255" key="1">
    <source>
        <dbReference type="HAMAP-Rule" id="MF_00387"/>
    </source>
</evidence>
<feature type="chain" id="PRO_1000122684" description="Acyl-[acyl-carrier-protein]--UDP-N-acetylglucosamine O-acyltransferase">
    <location>
        <begin position="1"/>
        <end position="257"/>
    </location>
</feature>
<dbReference type="EC" id="2.3.1.129" evidence="1"/>
<dbReference type="EMBL" id="CP000251">
    <property type="protein sequence ID" value="ABC80860.1"/>
    <property type="molecule type" value="Genomic_DNA"/>
</dbReference>
<dbReference type="RefSeq" id="WP_011420143.1">
    <property type="nucleotide sequence ID" value="NC_007760.1"/>
</dbReference>
<dbReference type="SMR" id="Q2IPX7"/>
<dbReference type="STRING" id="290397.Adeh_1085"/>
<dbReference type="KEGG" id="ade:Adeh_1085"/>
<dbReference type="eggNOG" id="COG1043">
    <property type="taxonomic scope" value="Bacteria"/>
</dbReference>
<dbReference type="HOGENOM" id="CLU_061249_0_0_7"/>
<dbReference type="OrthoDB" id="9807278at2"/>
<dbReference type="UniPathway" id="UPA00359">
    <property type="reaction ID" value="UER00477"/>
</dbReference>
<dbReference type="Proteomes" id="UP000001935">
    <property type="component" value="Chromosome"/>
</dbReference>
<dbReference type="GO" id="GO:0005737">
    <property type="term" value="C:cytoplasm"/>
    <property type="evidence" value="ECO:0007669"/>
    <property type="project" value="UniProtKB-SubCell"/>
</dbReference>
<dbReference type="GO" id="GO:0016020">
    <property type="term" value="C:membrane"/>
    <property type="evidence" value="ECO:0007669"/>
    <property type="project" value="GOC"/>
</dbReference>
<dbReference type="GO" id="GO:0008780">
    <property type="term" value="F:acyl-[acyl-carrier-protein]-UDP-N-acetylglucosamine O-acyltransferase activity"/>
    <property type="evidence" value="ECO:0007669"/>
    <property type="project" value="UniProtKB-UniRule"/>
</dbReference>
<dbReference type="GO" id="GO:0009245">
    <property type="term" value="P:lipid A biosynthetic process"/>
    <property type="evidence" value="ECO:0007669"/>
    <property type="project" value="UniProtKB-UniRule"/>
</dbReference>
<dbReference type="CDD" id="cd03351">
    <property type="entry name" value="LbH_UDP-GlcNAc_AT"/>
    <property type="match status" value="1"/>
</dbReference>
<dbReference type="Gene3D" id="2.160.10.10">
    <property type="entry name" value="Hexapeptide repeat proteins"/>
    <property type="match status" value="1"/>
</dbReference>
<dbReference type="Gene3D" id="1.20.1180.10">
    <property type="entry name" value="Udp N-acetylglucosamine O-acyltransferase, C-terminal domain"/>
    <property type="match status" value="1"/>
</dbReference>
<dbReference type="HAMAP" id="MF_00387">
    <property type="entry name" value="LpxA"/>
    <property type="match status" value="1"/>
</dbReference>
<dbReference type="InterPro" id="IPR029098">
    <property type="entry name" value="Acetyltransf_C"/>
</dbReference>
<dbReference type="InterPro" id="IPR037157">
    <property type="entry name" value="Acetyltransf_C_sf"/>
</dbReference>
<dbReference type="InterPro" id="IPR010137">
    <property type="entry name" value="Lipid_A_LpxA"/>
</dbReference>
<dbReference type="InterPro" id="IPR011004">
    <property type="entry name" value="Trimer_LpxA-like_sf"/>
</dbReference>
<dbReference type="NCBIfam" id="TIGR01852">
    <property type="entry name" value="lipid_A_lpxA"/>
    <property type="match status" value="1"/>
</dbReference>
<dbReference type="NCBIfam" id="NF003657">
    <property type="entry name" value="PRK05289.1"/>
    <property type="match status" value="1"/>
</dbReference>
<dbReference type="PANTHER" id="PTHR43480">
    <property type="entry name" value="ACYL-[ACYL-CARRIER-PROTEIN]--UDP-N-ACETYLGLUCOSAMINE O-ACYLTRANSFERASE"/>
    <property type="match status" value="1"/>
</dbReference>
<dbReference type="PANTHER" id="PTHR43480:SF1">
    <property type="entry name" value="ACYL-[ACYL-CARRIER-PROTEIN]--UDP-N-ACETYLGLUCOSAMINE O-ACYLTRANSFERASE, MITOCHONDRIAL-RELATED"/>
    <property type="match status" value="1"/>
</dbReference>
<dbReference type="Pfam" id="PF13720">
    <property type="entry name" value="Acetyltransf_11"/>
    <property type="match status" value="1"/>
</dbReference>
<dbReference type="PIRSF" id="PIRSF000456">
    <property type="entry name" value="UDP-GlcNAc_acltr"/>
    <property type="match status" value="1"/>
</dbReference>
<dbReference type="SUPFAM" id="SSF51161">
    <property type="entry name" value="Trimeric LpxA-like enzymes"/>
    <property type="match status" value="1"/>
</dbReference>
<comment type="function">
    <text evidence="1">Involved in the biosynthesis of lipid A, a phosphorylated glycolipid that anchors the lipopolysaccharide to the outer membrane of the cell.</text>
</comment>
<comment type="catalytic activity">
    <reaction evidence="1">
        <text>a (3R)-hydroxyacyl-[ACP] + UDP-N-acetyl-alpha-D-glucosamine = a UDP-3-O-[(3R)-3-hydroxyacyl]-N-acetyl-alpha-D-glucosamine + holo-[ACP]</text>
        <dbReference type="Rhea" id="RHEA:67812"/>
        <dbReference type="Rhea" id="RHEA-COMP:9685"/>
        <dbReference type="Rhea" id="RHEA-COMP:9945"/>
        <dbReference type="ChEBI" id="CHEBI:57705"/>
        <dbReference type="ChEBI" id="CHEBI:64479"/>
        <dbReference type="ChEBI" id="CHEBI:78827"/>
        <dbReference type="ChEBI" id="CHEBI:173225"/>
        <dbReference type="EC" id="2.3.1.129"/>
    </reaction>
</comment>
<comment type="pathway">
    <text evidence="1">Glycolipid biosynthesis; lipid IV(A) biosynthesis; lipid IV(A) from (3R)-3-hydroxytetradecanoyl-[acyl-carrier-protein] and UDP-N-acetyl-alpha-D-glucosamine: step 1/6.</text>
</comment>
<comment type="subunit">
    <text evidence="1">Homotrimer.</text>
</comment>
<comment type="subcellular location">
    <subcellularLocation>
        <location evidence="1">Cytoplasm</location>
    </subcellularLocation>
</comment>
<comment type="similarity">
    <text evidence="1">Belongs to the transferase hexapeptide repeat family. LpxA subfamily.</text>
</comment>